<protein>
    <recommendedName>
        <fullName>Protein SWT21</fullName>
    </recommendedName>
</protein>
<organism>
    <name type="scientific">Zygosaccharomyces rouxii (strain ATCC 2623 / CBS 732 / NBRC 1130 / NCYC 568 / NRRL Y-229)</name>
    <dbReference type="NCBI Taxonomy" id="559307"/>
    <lineage>
        <taxon>Eukaryota</taxon>
        <taxon>Fungi</taxon>
        <taxon>Dikarya</taxon>
        <taxon>Ascomycota</taxon>
        <taxon>Saccharomycotina</taxon>
        <taxon>Saccharomycetes</taxon>
        <taxon>Saccharomycetales</taxon>
        <taxon>Saccharomycetaceae</taxon>
        <taxon>Zygosaccharomyces</taxon>
    </lineage>
</organism>
<sequence>MYAELKDGMGTRDVFDGWNVQKVWQKEDEAWINRTQNSGMKLQNPAFAQGKNWERPVICQDIFWSRDGSSIVTIHDDYGIRQYVMSLEGNTDQLVPYSRMFKSQSIVTGRVHPLYSLYNDTEDFNVLLTACKDLPLQMYSLQDTEGPCLNHYNVINNETGNWEIPHAINWSNEDHFLIGSVKNRVSLFSCYRSSPIWTSQSKRGNSTSKSIVSCFSERPYGEFSNAKHTIFGTYKNELHLLDHRTQHPQFLHRSAQGRGYIQLLESFNGHYLYALKRNTNLIDVLDTRESHRPVNQLQLPFTMGNQKHKASITSTNGLTIGTDDGKIVCWSSNAIEFGVIDRNGLTCDNGAGEKPELTHEMGLNSSRINIVQQSPTDFGVCALSYSPDKMTYRPDVHASSGIYVTELTTDWFGL</sequence>
<feature type="chain" id="PRO_0000405692" description="Protein SWT21">
    <location>
        <begin position="1"/>
        <end position="414"/>
    </location>
</feature>
<reference key="1">
    <citation type="journal article" date="2009" name="Genome Res.">
        <title>Comparative genomics of protoploid Saccharomycetaceae.</title>
        <authorList>
            <consortium name="The Genolevures Consortium"/>
            <person name="Souciet J.-L."/>
            <person name="Dujon B."/>
            <person name="Gaillardin C."/>
            <person name="Johnston M."/>
            <person name="Baret P.V."/>
            <person name="Cliften P."/>
            <person name="Sherman D.J."/>
            <person name="Weissenbach J."/>
            <person name="Westhof E."/>
            <person name="Wincker P."/>
            <person name="Jubin C."/>
            <person name="Poulain J."/>
            <person name="Barbe V."/>
            <person name="Segurens B."/>
            <person name="Artiguenave F."/>
            <person name="Anthouard V."/>
            <person name="Vacherie B."/>
            <person name="Val M.-E."/>
            <person name="Fulton R.S."/>
            <person name="Minx P."/>
            <person name="Wilson R."/>
            <person name="Durrens P."/>
            <person name="Jean G."/>
            <person name="Marck C."/>
            <person name="Martin T."/>
            <person name="Nikolski M."/>
            <person name="Rolland T."/>
            <person name="Seret M.-L."/>
            <person name="Casaregola S."/>
            <person name="Despons L."/>
            <person name="Fairhead C."/>
            <person name="Fischer G."/>
            <person name="Lafontaine I."/>
            <person name="Leh V."/>
            <person name="Lemaire M."/>
            <person name="de Montigny J."/>
            <person name="Neuveglise C."/>
            <person name="Thierry A."/>
            <person name="Blanc-Lenfle I."/>
            <person name="Bleykasten C."/>
            <person name="Diffels J."/>
            <person name="Fritsch E."/>
            <person name="Frangeul L."/>
            <person name="Goeffon A."/>
            <person name="Jauniaux N."/>
            <person name="Kachouri-Lafond R."/>
            <person name="Payen C."/>
            <person name="Potier S."/>
            <person name="Pribylova L."/>
            <person name="Ozanne C."/>
            <person name="Richard G.-F."/>
            <person name="Sacerdot C."/>
            <person name="Straub M.-L."/>
            <person name="Talla E."/>
        </authorList>
    </citation>
    <scope>NUCLEOTIDE SEQUENCE [LARGE SCALE GENOMIC DNA]</scope>
    <source>
        <strain>ATCC 2623 / CBS 732 / BCRC 21506 / NBRC 1130 / NCYC 568 / NRRL Y-229</strain>
    </source>
</reference>
<comment type="function">
    <text evidence="1">Involved in mRNA splicing. Helps to stabilize the U1 snRNP-5' splice site interaction (By similarity).</text>
</comment>
<comment type="subunit">
    <text evidence="1">Associates with snRNPs.</text>
</comment>
<comment type="subcellular location">
    <subcellularLocation>
        <location evidence="1">Nucleus</location>
    </subcellularLocation>
</comment>
<comment type="similarity">
    <text evidence="2">Belongs to the SWT21 family.</text>
</comment>
<keyword id="KW-0507">mRNA processing</keyword>
<keyword id="KW-0508">mRNA splicing</keyword>
<keyword id="KW-0539">Nucleus</keyword>
<keyword id="KW-1185">Reference proteome</keyword>
<evidence type="ECO:0000250" key="1"/>
<evidence type="ECO:0000305" key="2"/>
<dbReference type="EMBL" id="CU928175">
    <property type="protein sequence ID" value="CAR27141.1"/>
    <property type="molecule type" value="Genomic_DNA"/>
</dbReference>
<dbReference type="RefSeq" id="XP_002496074.1">
    <property type="nucleotide sequence ID" value="XM_002496029.1"/>
</dbReference>
<dbReference type="FunCoup" id="C5DTN0">
    <property type="interactions" value="36"/>
</dbReference>
<dbReference type="STRING" id="559307.C5DTN0"/>
<dbReference type="GeneID" id="8203288"/>
<dbReference type="KEGG" id="zro:ZYRO0C09878g"/>
<dbReference type="HOGENOM" id="CLU_662333_0_0_1"/>
<dbReference type="InParanoid" id="C5DTN0"/>
<dbReference type="Proteomes" id="UP000008536">
    <property type="component" value="Chromosome C"/>
</dbReference>
<dbReference type="GO" id="GO:0005634">
    <property type="term" value="C:nucleus"/>
    <property type="evidence" value="ECO:0007669"/>
    <property type="project" value="UniProtKB-SubCell"/>
</dbReference>
<dbReference type="GO" id="GO:0006397">
    <property type="term" value="P:mRNA processing"/>
    <property type="evidence" value="ECO:0007669"/>
    <property type="project" value="UniProtKB-KW"/>
</dbReference>
<dbReference type="GO" id="GO:0008380">
    <property type="term" value="P:RNA splicing"/>
    <property type="evidence" value="ECO:0007669"/>
    <property type="project" value="UniProtKB-KW"/>
</dbReference>
<dbReference type="Gene3D" id="2.130.10.10">
    <property type="entry name" value="YVTN repeat-like/Quinoprotein amine dehydrogenase"/>
    <property type="match status" value="1"/>
</dbReference>
<dbReference type="InterPro" id="IPR051150">
    <property type="entry name" value="SWT21/TCAB1_mRNA_Telomere"/>
</dbReference>
<dbReference type="InterPro" id="IPR015943">
    <property type="entry name" value="WD40/YVTN_repeat-like_dom_sf"/>
</dbReference>
<dbReference type="InterPro" id="IPR036322">
    <property type="entry name" value="WD40_repeat_dom_sf"/>
</dbReference>
<dbReference type="PANTHER" id="PTHR13211">
    <property type="entry name" value="TELOMERASE CAJAL BODY PROTEIN 1"/>
    <property type="match status" value="1"/>
</dbReference>
<dbReference type="PANTHER" id="PTHR13211:SF0">
    <property type="entry name" value="TELOMERASE CAJAL BODY PROTEIN 1"/>
    <property type="match status" value="1"/>
</dbReference>
<dbReference type="SUPFAM" id="SSF50978">
    <property type="entry name" value="WD40 repeat-like"/>
    <property type="match status" value="1"/>
</dbReference>
<name>SWT21_ZYGRC</name>
<accession>C5DTN0</accession>
<proteinExistence type="inferred from homology"/>
<gene>
    <name type="primary">SWT21</name>
    <name type="ordered locus">ZYRO0C09878g</name>
</gene>